<sequence length="359" mass="40436">MEKLRVELGERSYEILIDRGNLSLIGERLLRFSISKKIGIISNPKVSELYGQKVISSLQKEGFEPFVILIPDGEHYKDYFWAYHILTQLLEFGFDRGSFLIALGGGVIGDITGFVASIYMRGISYIQIPTTLLAQVDSSVGGKTAVNHPLGKNMIGTFWQPSLVWIDVDTLESLPEREFISGLAEVIKYGVIWDKEFFEFLEINRTKILKKDKDILISIIKRACEIKAEVVSKDERESALRAILNYGHTIGHAIETLTGYSSYLHGEAISIGMVHEAKLSSMLGFLDKEDFEKIRNILKEFGLPVNLPINMDSSAMLKTILLDKKNIEGKIRMVIPDSIGKMKINFEISGEDLKKVLNE</sequence>
<proteinExistence type="inferred from homology"/>
<dbReference type="EC" id="4.2.3.4" evidence="1"/>
<dbReference type="EMBL" id="CP001147">
    <property type="protein sequence ID" value="ACI20583.1"/>
    <property type="molecule type" value="Genomic_DNA"/>
</dbReference>
<dbReference type="RefSeq" id="WP_012545319.1">
    <property type="nucleotide sequence ID" value="NC_011296.1"/>
</dbReference>
<dbReference type="RefSeq" id="YP_002248006.1">
    <property type="nucleotide sequence ID" value="NC_011296.1"/>
</dbReference>
<dbReference type="SMR" id="B5YHI4"/>
<dbReference type="FunCoup" id="B5YHI4">
    <property type="interactions" value="444"/>
</dbReference>
<dbReference type="STRING" id="289376.THEYE_A0155"/>
<dbReference type="EnsemblBacteria" id="ACI20583">
    <property type="protein sequence ID" value="ACI20583"/>
    <property type="gene ID" value="THEYE_A0155"/>
</dbReference>
<dbReference type="KEGG" id="tye:THEYE_A0155"/>
<dbReference type="PATRIC" id="fig|289376.4.peg.152"/>
<dbReference type="eggNOG" id="COG0337">
    <property type="taxonomic scope" value="Bacteria"/>
</dbReference>
<dbReference type="HOGENOM" id="CLU_001201_0_2_0"/>
<dbReference type="InParanoid" id="B5YHI4"/>
<dbReference type="OrthoDB" id="9806583at2"/>
<dbReference type="UniPathway" id="UPA00053">
    <property type="reaction ID" value="UER00085"/>
</dbReference>
<dbReference type="Proteomes" id="UP000000718">
    <property type="component" value="Chromosome"/>
</dbReference>
<dbReference type="GO" id="GO:0005737">
    <property type="term" value="C:cytoplasm"/>
    <property type="evidence" value="ECO:0007669"/>
    <property type="project" value="UniProtKB-SubCell"/>
</dbReference>
<dbReference type="GO" id="GO:0003856">
    <property type="term" value="F:3-dehydroquinate synthase activity"/>
    <property type="evidence" value="ECO:0000318"/>
    <property type="project" value="GO_Central"/>
</dbReference>
<dbReference type="GO" id="GO:0046872">
    <property type="term" value="F:metal ion binding"/>
    <property type="evidence" value="ECO:0007669"/>
    <property type="project" value="UniProtKB-KW"/>
</dbReference>
<dbReference type="GO" id="GO:0000166">
    <property type="term" value="F:nucleotide binding"/>
    <property type="evidence" value="ECO:0007669"/>
    <property type="project" value="UniProtKB-KW"/>
</dbReference>
<dbReference type="GO" id="GO:0008652">
    <property type="term" value="P:amino acid biosynthetic process"/>
    <property type="evidence" value="ECO:0007669"/>
    <property type="project" value="UniProtKB-KW"/>
</dbReference>
<dbReference type="GO" id="GO:0009073">
    <property type="term" value="P:aromatic amino acid family biosynthetic process"/>
    <property type="evidence" value="ECO:0000318"/>
    <property type="project" value="GO_Central"/>
</dbReference>
<dbReference type="GO" id="GO:0009423">
    <property type="term" value="P:chorismate biosynthetic process"/>
    <property type="evidence" value="ECO:0007669"/>
    <property type="project" value="UniProtKB-UniRule"/>
</dbReference>
<dbReference type="CDD" id="cd08195">
    <property type="entry name" value="DHQS"/>
    <property type="match status" value="1"/>
</dbReference>
<dbReference type="FunFam" id="3.40.50.1970:FF:000001">
    <property type="entry name" value="3-dehydroquinate synthase"/>
    <property type="match status" value="1"/>
</dbReference>
<dbReference type="Gene3D" id="3.40.50.1970">
    <property type="match status" value="1"/>
</dbReference>
<dbReference type="Gene3D" id="1.20.1090.10">
    <property type="entry name" value="Dehydroquinate synthase-like - alpha domain"/>
    <property type="match status" value="1"/>
</dbReference>
<dbReference type="HAMAP" id="MF_00110">
    <property type="entry name" value="DHQ_synthase"/>
    <property type="match status" value="1"/>
</dbReference>
<dbReference type="InterPro" id="IPR050071">
    <property type="entry name" value="Dehydroquinate_synthase"/>
</dbReference>
<dbReference type="InterPro" id="IPR016037">
    <property type="entry name" value="DHQ_synth_AroB"/>
</dbReference>
<dbReference type="InterPro" id="IPR030963">
    <property type="entry name" value="DHQ_synth_fam"/>
</dbReference>
<dbReference type="InterPro" id="IPR030960">
    <property type="entry name" value="DHQS/DOIS_N"/>
</dbReference>
<dbReference type="InterPro" id="IPR056179">
    <property type="entry name" value="DHQS_C"/>
</dbReference>
<dbReference type="NCBIfam" id="TIGR01357">
    <property type="entry name" value="aroB"/>
    <property type="match status" value="1"/>
</dbReference>
<dbReference type="PANTHER" id="PTHR43622">
    <property type="entry name" value="3-DEHYDROQUINATE SYNTHASE"/>
    <property type="match status" value="1"/>
</dbReference>
<dbReference type="PANTHER" id="PTHR43622:SF7">
    <property type="entry name" value="3-DEHYDROQUINATE SYNTHASE, CHLOROPLASTIC"/>
    <property type="match status" value="1"/>
</dbReference>
<dbReference type="Pfam" id="PF01761">
    <property type="entry name" value="DHQ_synthase"/>
    <property type="match status" value="1"/>
</dbReference>
<dbReference type="Pfam" id="PF24621">
    <property type="entry name" value="DHQS_C"/>
    <property type="match status" value="1"/>
</dbReference>
<dbReference type="PIRSF" id="PIRSF001455">
    <property type="entry name" value="DHQ_synth"/>
    <property type="match status" value="1"/>
</dbReference>
<dbReference type="SUPFAM" id="SSF56796">
    <property type="entry name" value="Dehydroquinate synthase-like"/>
    <property type="match status" value="1"/>
</dbReference>
<name>AROB_THEYD</name>
<gene>
    <name evidence="1" type="primary">aroB</name>
    <name type="ordered locus">THEYE_A0155</name>
</gene>
<reference key="1">
    <citation type="submission" date="2008-08" db="EMBL/GenBank/DDBJ databases">
        <title>The complete genome sequence of Thermodesulfovibrio yellowstonii strain ATCC 51303 / DSM 11347 / YP87.</title>
        <authorList>
            <person name="Dodson R.J."/>
            <person name="Durkin A.S."/>
            <person name="Wu M."/>
            <person name="Eisen J."/>
            <person name="Sutton G."/>
        </authorList>
    </citation>
    <scope>NUCLEOTIDE SEQUENCE [LARGE SCALE GENOMIC DNA]</scope>
    <source>
        <strain>ATCC 51303 / DSM 11347 / YP87</strain>
    </source>
</reference>
<organism>
    <name type="scientific">Thermodesulfovibrio yellowstonii (strain ATCC 51303 / DSM 11347 / YP87)</name>
    <dbReference type="NCBI Taxonomy" id="289376"/>
    <lineage>
        <taxon>Bacteria</taxon>
        <taxon>Pseudomonadati</taxon>
        <taxon>Nitrospirota</taxon>
        <taxon>Thermodesulfovibrionia</taxon>
        <taxon>Thermodesulfovibrionales</taxon>
        <taxon>Thermodesulfovibrionaceae</taxon>
        <taxon>Thermodesulfovibrio</taxon>
    </lineage>
</organism>
<evidence type="ECO:0000255" key="1">
    <source>
        <dbReference type="HAMAP-Rule" id="MF_00110"/>
    </source>
</evidence>
<protein>
    <recommendedName>
        <fullName evidence="1">3-dehydroquinate synthase</fullName>
        <shortName evidence="1">DHQS</shortName>
        <ecNumber evidence="1">4.2.3.4</ecNumber>
    </recommendedName>
</protein>
<keyword id="KW-0028">Amino-acid biosynthesis</keyword>
<keyword id="KW-0057">Aromatic amino acid biosynthesis</keyword>
<keyword id="KW-0170">Cobalt</keyword>
<keyword id="KW-0963">Cytoplasm</keyword>
<keyword id="KW-0456">Lyase</keyword>
<keyword id="KW-0479">Metal-binding</keyword>
<keyword id="KW-0520">NAD</keyword>
<keyword id="KW-0547">Nucleotide-binding</keyword>
<keyword id="KW-1185">Reference proteome</keyword>
<keyword id="KW-0862">Zinc</keyword>
<accession>B5YHI4</accession>
<comment type="function">
    <text evidence="1">Catalyzes the conversion of 3-deoxy-D-arabino-heptulosonate 7-phosphate (DAHP) to dehydroquinate (DHQ).</text>
</comment>
<comment type="catalytic activity">
    <reaction evidence="1">
        <text>7-phospho-2-dehydro-3-deoxy-D-arabino-heptonate = 3-dehydroquinate + phosphate</text>
        <dbReference type="Rhea" id="RHEA:21968"/>
        <dbReference type="ChEBI" id="CHEBI:32364"/>
        <dbReference type="ChEBI" id="CHEBI:43474"/>
        <dbReference type="ChEBI" id="CHEBI:58394"/>
        <dbReference type="EC" id="4.2.3.4"/>
    </reaction>
</comment>
<comment type="cofactor">
    <cofactor evidence="1">
        <name>Co(2+)</name>
        <dbReference type="ChEBI" id="CHEBI:48828"/>
    </cofactor>
    <cofactor evidence="1">
        <name>Zn(2+)</name>
        <dbReference type="ChEBI" id="CHEBI:29105"/>
    </cofactor>
    <text evidence="1">Binds 1 divalent metal cation per subunit. Can use either Co(2+) or Zn(2+).</text>
</comment>
<comment type="cofactor">
    <cofactor evidence="1">
        <name>NAD(+)</name>
        <dbReference type="ChEBI" id="CHEBI:57540"/>
    </cofactor>
</comment>
<comment type="pathway">
    <text evidence="1">Metabolic intermediate biosynthesis; chorismate biosynthesis; chorismate from D-erythrose 4-phosphate and phosphoenolpyruvate: step 2/7.</text>
</comment>
<comment type="subcellular location">
    <subcellularLocation>
        <location evidence="1">Cytoplasm</location>
    </subcellularLocation>
</comment>
<comment type="similarity">
    <text evidence="1">Belongs to the sugar phosphate cyclases superfamily. Dehydroquinate synthase family.</text>
</comment>
<feature type="chain" id="PRO_1000094649" description="3-dehydroquinate synthase">
    <location>
        <begin position="1"/>
        <end position="359"/>
    </location>
</feature>
<feature type="binding site" evidence="1">
    <location>
        <begin position="72"/>
        <end position="77"/>
    </location>
    <ligand>
        <name>NAD(+)</name>
        <dbReference type="ChEBI" id="CHEBI:57540"/>
    </ligand>
</feature>
<feature type="binding site" evidence="1">
    <location>
        <begin position="106"/>
        <end position="110"/>
    </location>
    <ligand>
        <name>NAD(+)</name>
        <dbReference type="ChEBI" id="CHEBI:57540"/>
    </ligand>
</feature>
<feature type="binding site" evidence="1">
    <location>
        <begin position="130"/>
        <end position="131"/>
    </location>
    <ligand>
        <name>NAD(+)</name>
        <dbReference type="ChEBI" id="CHEBI:57540"/>
    </ligand>
</feature>
<feature type="binding site" evidence="1">
    <location>
        <position position="143"/>
    </location>
    <ligand>
        <name>NAD(+)</name>
        <dbReference type="ChEBI" id="CHEBI:57540"/>
    </ligand>
</feature>
<feature type="binding site" evidence="1">
    <location>
        <position position="152"/>
    </location>
    <ligand>
        <name>NAD(+)</name>
        <dbReference type="ChEBI" id="CHEBI:57540"/>
    </ligand>
</feature>
<feature type="binding site" evidence="1">
    <location>
        <position position="185"/>
    </location>
    <ligand>
        <name>Zn(2+)</name>
        <dbReference type="ChEBI" id="CHEBI:29105"/>
    </ligand>
</feature>
<feature type="binding site" evidence="1">
    <location>
        <position position="248"/>
    </location>
    <ligand>
        <name>Zn(2+)</name>
        <dbReference type="ChEBI" id="CHEBI:29105"/>
    </ligand>
</feature>
<feature type="binding site" evidence="1">
    <location>
        <position position="265"/>
    </location>
    <ligand>
        <name>Zn(2+)</name>
        <dbReference type="ChEBI" id="CHEBI:29105"/>
    </ligand>
</feature>